<keyword id="KW-0968">Cytoplasmic vesicle</keyword>
<keyword id="KW-0472">Membrane</keyword>
<keyword id="KW-1185">Reference proteome</keyword>
<keyword id="KW-0832">Ubl conjugation</keyword>
<keyword id="KW-0833">Ubl conjugation pathway</keyword>
<reference key="1">
    <citation type="journal article" date="2002" name="Nature">
        <title>The genome sequence of Schizosaccharomyces pombe.</title>
        <authorList>
            <person name="Wood V."/>
            <person name="Gwilliam R."/>
            <person name="Rajandream M.A."/>
            <person name="Lyne M.H."/>
            <person name="Lyne R."/>
            <person name="Stewart A."/>
            <person name="Sgouros J.G."/>
            <person name="Peat N."/>
            <person name="Hayles J."/>
            <person name="Baker S.G."/>
            <person name="Basham D."/>
            <person name="Bowman S."/>
            <person name="Brooks K."/>
            <person name="Brown D."/>
            <person name="Brown S."/>
            <person name="Chillingworth T."/>
            <person name="Churcher C.M."/>
            <person name="Collins M."/>
            <person name="Connor R."/>
            <person name="Cronin A."/>
            <person name="Davis P."/>
            <person name="Feltwell T."/>
            <person name="Fraser A."/>
            <person name="Gentles S."/>
            <person name="Goble A."/>
            <person name="Hamlin N."/>
            <person name="Harris D.E."/>
            <person name="Hidalgo J."/>
            <person name="Hodgson G."/>
            <person name="Holroyd S."/>
            <person name="Hornsby T."/>
            <person name="Howarth S."/>
            <person name="Huckle E.J."/>
            <person name="Hunt S."/>
            <person name="Jagels K."/>
            <person name="James K.D."/>
            <person name="Jones L."/>
            <person name="Jones M."/>
            <person name="Leather S."/>
            <person name="McDonald S."/>
            <person name="McLean J."/>
            <person name="Mooney P."/>
            <person name="Moule S."/>
            <person name="Mungall K.L."/>
            <person name="Murphy L.D."/>
            <person name="Niblett D."/>
            <person name="Odell C."/>
            <person name="Oliver K."/>
            <person name="O'Neil S."/>
            <person name="Pearson D."/>
            <person name="Quail M.A."/>
            <person name="Rabbinowitsch E."/>
            <person name="Rutherford K.M."/>
            <person name="Rutter S."/>
            <person name="Saunders D."/>
            <person name="Seeger K."/>
            <person name="Sharp S."/>
            <person name="Skelton J."/>
            <person name="Simmonds M.N."/>
            <person name="Squares R."/>
            <person name="Squares S."/>
            <person name="Stevens K."/>
            <person name="Taylor K."/>
            <person name="Taylor R.G."/>
            <person name="Tivey A."/>
            <person name="Walsh S.V."/>
            <person name="Warren T."/>
            <person name="Whitehead S."/>
            <person name="Woodward J.R."/>
            <person name="Volckaert G."/>
            <person name="Aert R."/>
            <person name="Robben J."/>
            <person name="Grymonprez B."/>
            <person name="Weltjens I."/>
            <person name="Vanstreels E."/>
            <person name="Rieger M."/>
            <person name="Schaefer M."/>
            <person name="Mueller-Auer S."/>
            <person name="Gabel C."/>
            <person name="Fuchs M."/>
            <person name="Duesterhoeft A."/>
            <person name="Fritzc C."/>
            <person name="Holzer E."/>
            <person name="Moestl D."/>
            <person name="Hilbert H."/>
            <person name="Borzym K."/>
            <person name="Langer I."/>
            <person name="Beck A."/>
            <person name="Lehrach H."/>
            <person name="Reinhardt R."/>
            <person name="Pohl T.M."/>
            <person name="Eger P."/>
            <person name="Zimmermann W."/>
            <person name="Wedler H."/>
            <person name="Wambutt R."/>
            <person name="Purnelle B."/>
            <person name="Goffeau A."/>
            <person name="Cadieu E."/>
            <person name="Dreano S."/>
            <person name="Gloux S."/>
            <person name="Lelaure V."/>
            <person name="Mottier S."/>
            <person name="Galibert F."/>
            <person name="Aves S.J."/>
            <person name="Xiang Z."/>
            <person name="Hunt C."/>
            <person name="Moore K."/>
            <person name="Hurst S.M."/>
            <person name="Lucas M."/>
            <person name="Rochet M."/>
            <person name="Gaillardin C."/>
            <person name="Tallada V.A."/>
            <person name="Garzon A."/>
            <person name="Thode G."/>
            <person name="Daga R.R."/>
            <person name="Cruzado L."/>
            <person name="Jimenez J."/>
            <person name="Sanchez M."/>
            <person name="del Rey F."/>
            <person name="Benito J."/>
            <person name="Dominguez A."/>
            <person name="Revuelta J.L."/>
            <person name="Moreno S."/>
            <person name="Armstrong J."/>
            <person name="Forsburg S.L."/>
            <person name="Cerutti L."/>
            <person name="Lowe T."/>
            <person name="McCombie W.R."/>
            <person name="Paulsen I."/>
            <person name="Potashkin J."/>
            <person name="Shpakovski G.V."/>
            <person name="Ussery D."/>
            <person name="Barrell B.G."/>
            <person name="Nurse P."/>
        </authorList>
    </citation>
    <scope>NUCLEOTIDE SEQUENCE [LARGE SCALE GENOMIC DNA]</scope>
    <source>
        <strain>972 / ATCC 24843</strain>
    </source>
</reference>
<evidence type="ECO:0000250" key="1">
    <source>
        <dbReference type="UniProtKB" id="P38263"/>
    </source>
</evidence>
<evidence type="ECO:0000305" key="2"/>
<evidence type="ECO:0000312" key="3">
    <source>
        <dbReference type="PomBase" id="SPAC3H1.14"/>
    </source>
</evidence>
<proteinExistence type="inferred from homology"/>
<sequence length="195" mass="22652">MKGCSFLRNGAKFQGKQKGVSSSTLEVHVTILHVNLAKSMLCGFIHVSYTSPNNTSLTTYFEAEIIGNRFTFETKWPEWGASEEIDNRHWKRLGALKSNGKDIPLRLIQPYDPLSRETVYMRWKELAMLDKTVDYQNHNQSFPFGISYEGFYYISFSQSTGKIKGYYYHHSEPEKVLFLELNPIIDRTFPVIEFQ</sequence>
<name>GID4_SCHPO</name>
<dbReference type="EMBL" id="CU329670">
    <property type="protein sequence ID" value="CAA92267.2"/>
    <property type="molecule type" value="Genomic_DNA"/>
</dbReference>
<dbReference type="PIR" id="T38746">
    <property type="entry name" value="T38746"/>
</dbReference>
<dbReference type="PIR" id="T39224">
    <property type="entry name" value="T39224"/>
</dbReference>
<dbReference type="RefSeq" id="NP_593556.2">
    <property type="nucleotide sequence ID" value="NM_001018989.2"/>
</dbReference>
<dbReference type="SMR" id="Q10079"/>
<dbReference type="BioGRID" id="279862">
    <property type="interactions" value="1"/>
</dbReference>
<dbReference type="FunCoup" id="Q10079">
    <property type="interactions" value="262"/>
</dbReference>
<dbReference type="STRING" id="284812.Q10079"/>
<dbReference type="iPTMnet" id="Q10079"/>
<dbReference type="PaxDb" id="4896-SPAC3H1.14.1"/>
<dbReference type="EnsemblFungi" id="SPAC3H1.14.1">
    <property type="protein sequence ID" value="SPAC3H1.14.1:pep"/>
    <property type="gene ID" value="SPAC3H1.14"/>
</dbReference>
<dbReference type="GeneID" id="2543442"/>
<dbReference type="KEGG" id="spo:2543442"/>
<dbReference type="PomBase" id="SPAC3H1.14">
    <property type="gene designation" value="gid4"/>
</dbReference>
<dbReference type="VEuPathDB" id="FungiDB:SPAC3H1.14"/>
<dbReference type="eggNOG" id="KOG4635">
    <property type="taxonomic scope" value="Eukaryota"/>
</dbReference>
<dbReference type="HOGENOM" id="CLU_028759_2_1_1"/>
<dbReference type="InParanoid" id="Q10079"/>
<dbReference type="OMA" id="HWSKFQC"/>
<dbReference type="PhylomeDB" id="Q10079"/>
<dbReference type="PRO" id="PR:Q10079"/>
<dbReference type="Proteomes" id="UP000002485">
    <property type="component" value="Chromosome I"/>
</dbReference>
<dbReference type="GO" id="GO:0030659">
    <property type="term" value="C:cytoplasmic vesicle membrane"/>
    <property type="evidence" value="ECO:0000250"/>
    <property type="project" value="PomBase"/>
</dbReference>
<dbReference type="GO" id="GO:0034657">
    <property type="term" value="C:GID complex"/>
    <property type="evidence" value="ECO:0000318"/>
    <property type="project" value="GO_Central"/>
</dbReference>
<dbReference type="GO" id="GO:0005773">
    <property type="term" value="C:vacuole"/>
    <property type="evidence" value="ECO:0007669"/>
    <property type="project" value="GOC"/>
</dbReference>
<dbReference type="GO" id="GO:0045721">
    <property type="term" value="P:negative regulation of gluconeogenesis"/>
    <property type="evidence" value="ECO:0000318"/>
    <property type="project" value="GO_Central"/>
</dbReference>
<dbReference type="GO" id="GO:0043161">
    <property type="term" value="P:proteasome-mediated ubiquitin-dependent protein catabolic process"/>
    <property type="evidence" value="ECO:0000318"/>
    <property type="project" value="GO_Central"/>
</dbReference>
<dbReference type="GO" id="GO:0007039">
    <property type="term" value="P:protein catabolic process in the vacuole"/>
    <property type="evidence" value="ECO:0000318"/>
    <property type="project" value="GO_Central"/>
</dbReference>
<dbReference type="GO" id="GO:0006623">
    <property type="term" value="P:protein targeting to vacuole"/>
    <property type="evidence" value="ECO:0000318"/>
    <property type="project" value="GO_Central"/>
</dbReference>
<dbReference type="InterPro" id="IPR018618">
    <property type="entry name" value="Vacuolar_import/degrad_Vid24"/>
</dbReference>
<dbReference type="PANTHER" id="PTHR14534:SF3">
    <property type="entry name" value="GID COMPLEX SUBUNIT 4 HOMOLOG"/>
    <property type="match status" value="1"/>
</dbReference>
<dbReference type="PANTHER" id="PTHR14534">
    <property type="entry name" value="VACUOLAR IMPORT AND DEGRADATION PROTEIN 24"/>
    <property type="match status" value="1"/>
</dbReference>
<dbReference type="Pfam" id="PF09783">
    <property type="entry name" value="Vac_ImportDeg"/>
    <property type="match status" value="1"/>
</dbReference>
<organism>
    <name type="scientific">Schizosaccharomyces pombe (strain 972 / ATCC 24843)</name>
    <name type="common">Fission yeast</name>
    <dbReference type="NCBI Taxonomy" id="284812"/>
    <lineage>
        <taxon>Eukaryota</taxon>
        <taxon>Fungi</taxon>
        <taxon>Dikarya</taxon>
        <taxon>Ascomycota</taxon>
        <taxon>Taphrinomycotina</taxon>
        <taxon>Schizosaccharomycetes</taxon>
        <taxon>Schizosaccharomycetales</taxon>
        <taxon>Schizosaccharomycetaceae</taxon>
        <taxon>Schizosaccharomyces</taxon>
    </lineage>
</organism>
<feature type="chain" id="PRO_0000116450" description="GID complex substrate-recognition subunit 4">
    <location>
        <begin position="1"/>
        <end position="195"/>
    </location>
</feature>
<protein>
    <recommendedName>
        <fullName>GID complex substrate-recognition subunit 4</fullName>
    </recommendedName>
    <alternativeName>
        <fullName>Glucose-induced degradation protein 4</fullName>
    </alternativeName>
</protein>
<comment type="function">
    <text evidence="1">Substrate-recognition component of the GID E3 ligase complex recruiting N termini and catalyzing ubiquitination of proteins targeted for degradation. GID E3 is regulated through assembly with interchangeable N-degron-binding substrate receptors induced by distinct environmental perturbations. Required for the adaptation to the presence of glucose in the growth medium; mediates the degradation of enzymes involved in gluconeogenesis when cells are shifted to glucose-containing medium. Specific for substrates with an N-terminal Pro (Pro/N-degron).</text>
</comment>
<comment type="subunit">
    <text evidence="1">Substrate-recognition component of the GID/CTLH complex. In the absence of stress, the complex exists as an inactive anticipatory complex (GID(Ant)), composed of Gid1, the E3 ubiquitin-ligase Gid2, Gid5, Gid8, and the RING-like subunit Gid9, awaiting a substrate receptor to form the active E3 ligase complex. When cells are shifted to glucose-containing medium, the substrate receptor Gid4 is induced and becomes part of the complex, named GID(SR4). Additionally, Gid7 transforms the GID(SR4) E3 ligase core into a higher-order supramolecular assembly (Chelator-GID(SR4)). Under osmotic or heat stress, the substrate receptor Gid10 is induced and becomes part of the complex, named GID(SR10). Interacts with proteins that have an N-terminal Pro/N-degron.</text>
</comment>
<comment type="subcellular location">
    <subcellularLocation>
        <location evidence="1">Cytoplasmic vesicle membrane</location>
        <topology evidence="1">Peripheral membrane protein</topology>
    </subcellularLocation>
    <text evidence="1">Colocalizes with FBPase-containing vesicles.</text>
</comment>
<comment type="PTM">
    <text evidence="1">Ubiquitinated by the GID complex, leading to subsequent proteasomal degradation.</text>
</comment>
<comment type="similarity">
    <text evidence="2">Belongs to the GID4/VID24 family.</text>
</comment>
<accession>Q10079</accession>
<accession>O14298</accession>
<gene>
    <name type="primary">gid4</name>
    <name evidence="3" type="ORF">SPAC3H1.14</name>
    <name type="ORF">SPAC9G1.01</name>
</gene>